<dbReference type="EC" id="3.1.1.3" evidence="5"/>
<dbReference type="EMBL" id="L26319">
    <property type="protein sequence ID" value="AAA57037.1"/>
    <property type="molecule type" value="mRNA"/>
</dbReference>
<dbReference type="PIR" id="JC4017">
    <property type="entry name" value="JC4017"/>
</dbReference>
<dbReference type="RefSeq" id="NP_776528.1">
    <property type="nucleotide sequence ID" value="NM_174103.2"/>
</dbReference>
<dbReference type="SMR" id="Q29458"/>
<dbReference type="FunCoup" id="Q29458">
    <property type="interactions" value="141"/>
</dbReference>
<dbReference type="STRING" id="9913.ENSBTAP00000008453"/>
<dbReference type="ESTHER" id="bovin-1lipg">
    <property type="family name" value="Acidic_Lipase"/>
</dbReference>
<dbReference type="GlyCosmos" id="Q29458">
    <property type="glycosylation" value="3 sites, No reported glycans"/>
</dbReference>
<dbReference type="GlyGen" id="Q29458">
    <property type="glycosylation" value="3 sites"/>
</dbReference>
<dbReference type="PaxDb" id="9913-ENSBTAP00000008453"/>
<dbReference type="GeneID" id="281283"/>
<dbReference type="KEGG" id="bta:281283"/>
<dbReference type="CTD" id="8513"/>
<dbReference type="eggNOG" id="KOG2624">
    <property type="taxonomic scope" value="Eukaryota"/>
</dbReference>
<dbReference type="InParanoid" id="Q29458"/>
<dbReference type="OrthoDB" id="9974421at2759"/>
<dbReference type="Proteomes" id="UP000009136">
    <property type="component" value="Unplaced"/>
</dbReference>
<dbReference type="GO" id="GO:0005576">
    <property type="term" value="C:extracellular region"/>
    <property type="evidence" value="ECO:0007669"/>
    <property type="project" value="UniProtKB-SubCell"/>
</dbReference>
<dbReference type="GO" id="GO:0043231">
    <property type="term" value="C:intracellular membrane-bounded organelle"/>
    <property type="evidence" value="ECO:0000318"/>
    <property type="project" value="GO_Central"/>
</dbReference>
<dbReference type="GO" id="GO:0004806">
    <property type="term" value="F:triacylglycerol lipase activity"/>
    <property type="evidence" value="ECO:0000314"/>
    <property type="project" value="UniProtKB"/>
</dbReference>
<dbReference type="GO" id="GO:0016042">
    <property type="term" value="P:lipid catabolic process"/>
    <property type="evidence" value="ECO:0007669"/>
    <property type="project" value="UniProtKB-KW"/>
</dbReference>
<dbReference type="FunFam" id="3.40.50.1820:FF:000012">
    <property type="entry name" value="Lipase"/>
    <property type="match status" value="1"/>
</dbReference>
<dbReference type="Gene3D" id="3.40.50.1820">
    <property type="entry name" value="alpha/beta hydrolase"/>
    <property type="match status" value="1"/>
</dbReference>
<dbReference type="InterPro" id="IPR029058">
    <property type="entry name" value="AB_hydrolase_fold"/>
</dbReference>
<dbReference type="InterPro" id="IPR006693">
    <property type="entry name" value="AB_hydrolase_lipase"/>
</dbReference>
<dbReference type="InterPro" id="IPR025483">
    <property type="entry name" value="Lipase_euk"/>
</dbReference>
<dbReference type="PANTHER" id="PTHR11005">
    <property type="entry name" value="LYSOSOMAL ACID LIPASE-RELATED"/>
    <property type="match status" value="1"/>
</dbReference>
<dbReference type="Pfam" id="PF04083">
    <property type="entry name" value="Abhydro_lipase"/>
    <property type="match status" value="1"/>
</dbReference>
<dbReference type="PIRSF" id="PIRSF000862">
    <property type="entry name" value="Steryl_ester_lip"/>
    <property type="match status" value="1"/>
</dbReference>
<dbReference type="SUPFAM" id="SSF53474">
    <property type="entry name" value="alpha/beta-Hydrolases"/>
    <property type="match status" value="1"/>
</dbReference>
<dbReference type="PROSITE" id="PS00120">
    <property type="entry name" value="LIPASE_SER"/>
    <property type="match status" value="1"/>
</dbReference>
<feature type="signal peptide" evidence="1">
    <location>
        <begin position="1"/>
        <end position="19"/>
    </location>
</feature>
<feature type="chain" id="PRO_0000017764" description="Gastric triacylglycerol lipase">
    <location>
        <begin position="20"/>
        <end position="397"/>
    </location>
</feature>
<feature type="domain" description="AB hydrolase-1" evidence="3">
    <location>
        <begin position="77"/>
        <end position="376"/>
    </location>
</feature>
<feature type="active site" description="Nucleophile" evidence="1">
    <location>
        <position position="171"/>
    </location>
</feature>
<feature type="active site" description="Charge relay system" evidence="4">
    <location>
        <position position="342"/>
    </location>
</feature>
<feature type="active site" description="Charge relay system" evidence="4">
    <location>
        <position position="371"/>
    </location>
</feature>
<feature type="glycosylation site" description="N-linked (GlcNAc...) asparagine" evidence="3">
    <location>
        <position position="33"/>
    </location>
</feature>
<feature type="glycosylation site" description="N-linked (GlcNAc...) asparagine" evidence="3">
    <location>
        <position position="270"/>
    </location>
</feature>
<feature type="glycosylation site" description="N-linked (GlcNAc...) asparagine" evidence="3">
    <location>
        <position position="326"/>
    </location>
</feature>
<feature type="disulfide bond" evidence="5">
    <location>
        <begin position="245"/>
        <end position="254"/>
    </location>
</feature>
<accession>Q29458</accession>
<reference key="1">
    <citation type="journal article" date="1994" name="Gene">
        <title>The cDNA sequence encoding bovine pregastric esterase.</title>
        <authorList>
            <person name="Timmermans M.Y.J."/>
            <person name="Kupers L.P.M."/>
            <person name="Teuchy H."/>
        </authorList>
    </citation>
    <scope>NUCLEOTIDE SEQUENCE [MRNA]</scope>
    <source>
        <tissue>Tongue serous gland</tissue>
    </source>
</reference>
<reference key="2">
    <citation type="journal article" date="1996" name="Biochem. J.">
        <title>Inhibition studies on calf pregastric esterase: the enzyme has no functional thiol group.</title>
        <authorList>
            <person name="Timmermans M.Y.J."/>
            <person name="Reekmans G."/>
            <person name="Teuchy H.J.H."/>
            <person name="Kupers L.P.M."/>
        </authorList>
    </citation>
    <scope>PARTIAL PROTEIN SEQUENCE</scope>
    <scope>DISULFIDE BOND</scope>
    <scope>FUNCTION</scope>
    <scope>CATALYTIC ACTIVITY</scope>
    <scope>ACTIVITY REGULATION</scope>
</reference>
<organism>
    <name type="scientific">Bos taurus</name>
    <name type="common">Bovine</name>
    <dbReference type="NCBI Taxonomy" id="9913"/>
    <lineage>
        <taxon>Eukaryota</taxon>
        <taxon>Metazoa</taxon>
        <taxon>Chordata</taxon>
        <taxon>Craniata</taxon>
        <taxon>Vertebrata</taxon>
        <taxon>Euteleostomi</taxon>
        <taxon>Mammalia</taxon>
        <taxon>Eutheria</taxon>
        <taxon>Laurasiatheria</taxon>
        <taxon>Artiodactyla</taxon>
        <taxon>Ruminantia</taxon>
        <taxon>Pecora</taxon>
        <taxon>Bovidae</taxon>
        <taxon>Bovinae</taxon>
        <taxon>Bos</taxon>
    </lineage>
</organism>
<keyword id="KW-0903">Direct protein sequencing</keyword>
<keyword id="KW-1015">Disulfide bond</keyword>
<keyword id="KW-0325">Glycoprotein</keyword>
<keyword id="KW-0378">Hydrolase</keyword>
<keyword id="KW-0442">Lipid degradation</keyword>
<keyword id="KW-0443">Lipid metabolism</keyword>
<keyword id="KW-1185">Reference proteome</keyword>
<keyword id="KW-0964">Secreted</keyword>
<keyword id="KW-0732">Signal</keyword>
<gene>
    <name type="primary">LIPF</name>
</gene>
<evidence type="ECO:0000250" key="1">
    <source>
        <dbReference type="UniProtKB" id="P07098"/>
    </source>
</evidence>
<evidence type="ECO:0000250" key="2">
    <source>
        <dbReference type="UniProtKB" id="P80035"/>
    </source>
</evidence>
<evidence type="ECO:0000255" key="3"/>
<evidence type="ECO:0000255" key="4">
    <source>
        <dbReference type="PROSITE-ProRule" id="PRU10037"/>
    </source>
</evidence>
<evidence type="ECO:0000269" key="5">
    <source>
    </source>
</evidence>
<evidence type="ECO:0000305" key="6"/>
<comment type="function">
    <text evidence="1 5">Catalyzes the hydrolysis of triacylglycerols to yield free fatty acids, diacylglycerol, monoacylglycerol, and glycerol (PubMed:8615791). Shows a preferential hydrolysis at the sn-3 position of triacylglycerol (By similarity).</text>
</comment>
<comment type="catalytic activity">
    <reaction evidence="5">
        <text>a triacylglycerol + H2O = a diacylglycerol + a fatty acid + H(+)</text>
        <dbReference type="Rhea" id="RHEA:12044"/>
        <dbReference type="ChEBI" id="CHEBI:15377"/>
        <dbReference type="ChEBI" id="CHEBI:15378"/>
        <dbReference type="ChEBI" id="CHEBI:17855"/>
        <dbReference type="ChEBI" id="CHEBI:18035"/>
        <dbReference type="ChEBI" id="CHEBI:28868"/>
        <dbReference type="EC" id="3.1.1.3"/>
    </reaction>
</comment>
<comment type="catalytic activity">
    <reaction evidence="1">
        <text>1,2,3-tri-(9Z-octadecenoyl)-glycerol + H2O = 1,2-di-(9Z-octadecenoyl)-sn-glycerol + (9Z)-octadecenoate + H(+)</text>
        <dbReference type="Rhea" id="RHEA:39931"/>
        <dbReference type="ChEBI" id="CHEBI:15377"/>
        <dbReference type="ChEBI" id="CHEBI:15378"/>
        <dbReference type="ChEBI" id="CHEBI:30823"/>
        <dbReference type="ChEBI" id="CHEBI:52333"/>
        <dbReference type="ChEBI" id="CHEBI:53753"/>
    </reaction>
    <physiologicalReaction direction="left-to-right" evidence="1">
        <dbReference type="Rhea" id="RHEA:39932"/>
    </physiologicalReaction>
</comment>
<comment type="catalytic activity">
    <reaction evidence="1">
        <text>1,2,3-trioctanoylglycerol + H2O = 1,2-dioctanoyl-sn-glycerol + octanoate + H(+)</text>
        <dbReference type="Rhea" id="RHEA:40047"/>
        <dbReference type="ChEBI" id="CHEBI:15377"/>
        <dbReference type="ChEBI" id="CHEBI:15378"/>
        <dbReference type="ChEBI" id="CHEBI:25646"/>
        <dbReference type="ChEBI" id="CHEBI:76978"/>
        <dbReference type="ChEBI" id="CHEBI:76979"/>
    </reaction>
    <physiologicalReaction direction="left-to-right" evidence="1">
        <dbReference type="Rhea" id="RHEA:40048"/>
    </physiologicalReaction>
</comment>
<comment type="activity regulation">
    <text evidence="5">Inhibited by diethylp-nitrophenyl phosphate but not inhibited by thiol reagents 5,5'-dithiobis(2-nitrobenzoic acid) or 4,4'-dithiopyridine.</text>
</comment>
<comment type="subcellular location">
    <subcellularLocation>
        <location evidence="2">Secreted</location>
    </subcellularLocation>
</comment>
<comment type="similarity">
    <text evidence="6">Belongs to the AB hydrolase superfamily. Lipase family.</text>
</comment>
<proteinExistence type="evidence at protein level"/>
<sequence length="397" mass="45231">MWWLLVTVCFIHMSGNAFCFLGKIAKNPEASMNVSQMISYWGYPSEMHKVITADGYILQVYRIPHGKNNANHLGQRPVVFLQHGLLGSATNWISNLPKNSLGFLLADAGYDVWLGNSRGNTWAQEHLYYSPDSPEFWAFSFDEMAEYDLPSTIDFILRRTGQKKLHYVGHSQGTTIGFIAFSTSPTLAEKIKVFYALAPVATVKYTKSLFNKLALIPHFLFKIIFGDKMFYPHTFLEQFLGVEMCSRETLDVLCKNALFAITGVDNKNFNMSRLDVYIAHNPAGTSVQNTLHWRQAVKSGKFQAFDWGAPYQNLMHYHQPTPPIYNLTAMNVPIAVWSADNDLLADPQDVDFLLSKLSNLIYHKEIPNYNHLDFIWAMDAPQEVYNEIVSLMAEDKK</sequence>
<name>LIPF_BOVIN</name>
<protein>
    <recommendedName>
        <fullName>Gastric triacylglycerol lipase</fullName>
        <shortName>GL</shortName>
        <shortName>Gastric lipase</shortName>
        <ecNumber evidence="5">3.1.1.3</ecNumber>
    </recommendedName>
    <alternativeName>
        <fullName>Pregastric esterase</fullName>
        <shortName>PGE</shortName>
    </alternativeName>
</protein>